<evidence type="ECO:0000250" key="1"/>
<evidence type="ECO:0000269" key="2">
    <source>
    </source>
</evidence>
<evidence type="ECO:0000305" key="3"/>
<protein>
    <recommendedName>
        <fullName>Pyruvate decarboxylase</fullName>
        <ecNumber>4.1.1.1</ecNumber>
    </recommendedName>
    <alternativeName>
        <fullName>8-10 nm cytoplasmic filament-associated protein</fullName>
    </alternativeName>
    <alternativeName>
        <fullName>P59NC</fullName>
    </alternativeName>
</protein>
<reference key="1">
    <citation type="journal article" date="1993" name="Gene">
        <title>The 59-kDa polypeptide constituent of 8-10-nm cytoplasmic filaments in Neurospora crassa is a pyruvate decarboxylase.</title>
        <authorList>
            <person name="Alvarez M.E."/>
            <person name="Rosa A.L."/>
            <person name="Temporini E.D."/>
            <person name="Wolstenholme A."/>
            <person name="Panzetta G."/>
            <person name="Patrito L."/>
            <person name="Maccioni H.J.F."/>
        </authorList>
    </citation>
    <scope>NUCLEOTIDE SEQUENCE [MRNA]</scope>
    <scope>PROTEIN SEQUENCE OF 3-25</scope>
    <source>
        <strain>ATCC 24698 / 74-OR23-1A / CBS 708.71 / DSM 1257 / FGSC 987</strain>
    </source>
</reference>
<reference key="2">
    <citation type="submission" date="1996-11" db="EMBL/GenBank/DDBJ databases">
        <authorList>
            <person name="Temporini E.D."/>
            <person name="Alvarez M.E."/>
            <person name="Mautino M."/>
            <person name="Kawaguchi T."/>
            <person name="Kinghorn J."/>
            <person name="Rosa A.L."/>
        </authorList>
    </citation>
    <scope>NUCLEOTIDE SEQUENCE</scope>
    <source>
        <tissue>Mycelium</tissue>
    </source>
</reference>
<reference key="3">
    <citation type="journal article" date="2003" name="Nature">
        <title>The genome sequence of the filamentous fungus Neurospora crassa.</title>
        <authorList>
            <person name="Galagan J.E."/>
            <person name="Calvo S.E."/>
            <person name="Borkovich K.A."/>
            <person name="Selker E.U."/>
            <person name="Read N.D."/>
            <person name="Jaffe D.B."/>
            <person name="FitzHugh W."/>
            <person name="Ma L.-J."/>
            <person name="Smirnov S."/>
            <person name="Purcell S."/>
            <person name="Rehman B."/>
            <person name="Elkins T."/>
            <person name="Engels R."/>
            <person name="Wang S."/>
            <person name="Nielsen C.B."/>
            <person name="Butler J."/>
            <person name="Endrizzi M."/>
            <person name="Qui D."/>
            <person name="Ianakiev P."/>
            <person name="Bell-Pedersen D."/>
            <person name="Nelson M.A."/>
            <person name="Werner-Washburne M."/>
            <person name="Selitrennikoff C.P."/>
            <person name="Kinsey J.A."/>
            <person name="Braun E.L."/>
            <person name="Zelter A."/>
            <person name="Schulte U."/>
            <person name="Kothe G.O."/>
            <person name="Jedd G."/>
            <person name="Mewes H.-W."/>
            <person name="Staben C."/>
            <person name="Marcotte E."/>
            <person name="Greenberg D."/>
            <person name="Roy A."/>
            <person name="Foley K."/>
            <person name="Naylor J."/>
            <person name="Stange-Thomann N."/>
            <person name="Barrett R."/>
            <person name="Gnerre S."/>
            <person name="Kamal M."/>
            <person name="Kamvysselis M."/>
            <person name="Mauceli E.W."/>
            <person name="Bielke C."/>
            <person name="Rudd S."/>
            <person name="Frishman D."/>
            <person name="Krystofova S."/>
            <person name="Rasmussen C."/>
            <person name="Metzenberg R.L."/>
            <person name="Perkins D.D."/>
            <person name="Kroken S."/>
            <person name="Cogoni C."/>
            <person name="Macino G."/>
            <person name="Catcheside D.E.A."/>
            <person name="Li W."/>
            <person name="Pratt R.J."/>
            <person name="Osmani S.A."/>
            <person name="DeSouza C.P.C."/>
            <person name="Glass N.L."/>
            <person name="Orbach M.J."/>
            <person name="Berglund J.A."/>
            <person name="Voelker R."/>
            <person name="Yarden O."/>
            <person name="Plamann M."/>
            <person name="Seiler S."/>
            <person name="Dunlap J.C."/>
            <person name="Radford A."/>
            <person name="Aramayo R."/>
            <person name="Natvig D.O."/>
            <person name="Alex L.A."/>
            <person name="Mannhaupt G."/>
            <person name="Ebbole D.J."/>
            <person name="Freitag M."/>
            <person name="Paulsen I."/>
            <person name="Sachs M.S."/>
            <person name="Lander E.S."/>
            <person name="Nusbaum C."/>
            <person name="Birren B.W."/>
        </authorList>
    </citation>
    <scope>NUCLEOTIDE SEQUENCE [LARGE SCALE GENOMIC DNA]</scope>
    <source>
        <strain>ATCC 24698 / 74-OR23-1A / CBS 708.71 / DSM 1257 / FGSC 987</strain>
    </source>
</reference>
<reference key="4">
    <citation type="journal article" date="1992" name="Genetics">
        <title>Molecular cloning of a gene (cfp) encoding the cytoplasmic filament protein P59Nc and its genetic relationship to the snowflake locus of Neurospora crassa.</title>
        <authorList>
            <person name="Haedo S.D."/>
            <person name="Temporini E.D."/>
            <person name="Alvarez M.E."/>
            <person name="Maccioni H.J."/>
            <person name="Rosa A.L."/>
        </authorList>
    </citation>
    <scope>NUCLEOTIDE SEQUENCE [MRNA] OF 1-25</scope>
</reference>
<gene>
    <name type="primary">cfp</name>
    <name type="synonym">pdc-1</name>
    <name type="ORF">NCU02193</name>
</gene>
<accession>P33287</accession>
<accession>Q7RV97</accession>
<accession>V5IKN9</accession>
<sequence>MVAQQQGKFTVGDYLAERLAQVGVRHHFVVPGDYNLILLDKLQAHPDLKEVGCANELNCSLAAEGYARANGISACVVTYSVGALSAFNGTGSAYAENLPLVLISGSPNTNDPSQYHILHHTLGHPDYTYQYEMAKKITCCAVAIPRAIDAPRLIDRALRAAILARKPCYIEIPTNLAGATCVRPGPISAITDPITSDKSALEAAAKCAAEYLDGKLKPVILVGPKAGRAGSEKELIEFAEAMGCAVALQPAAKGMFPEDHKQFVGIFWGQVSSDAADAMVHWADAMICVGAVFNDYSTVGWTAVPNIPLMTVDMDHVTFPGAHFSRVRMCEFLSHLATQVTFNDSTMIEYKRLKPDPPHVHTAEREEPLSRKEISRQVQEMLTDKTSLFVDTGDSWFNGIQLKLPPGAKFEIEMQWGHIGWSIPAAFGYALRHPDRHTIVLVGDGSFQVTAQEVSQMVRFKVPITIMLINNRGYTIEVEIHDGSYNKIKNWDYAMLVEAFNSTDGHAKGLLANTAGELADAIKVAESHKEGPTLIECTIDQDDCSKELITWGHYVAAANARPPRNMSVQE</sequence>
<organism>
    <name type="scientific">Neurospora crassa (strain ATCC 24698 / 74-OR23-1A / CBS 708.71 / DSM 1257 / FGSC 987)</name>
    <dbReference type="NCBI Taxonomy" id="367110"/>
    <lineage>
        <taxon>Eukaryota</taxon>
        <taxon>Fungi</taxon>
        <taxon>Dikarya</taxon>
        <taxon>Ascomycota</taxon>
        <taxon>Pezizomycotina</taxon>
        <taxon>Sordariomycetes</taxon>
        <taxon>Sordariomycetidae</taxon>
        <taxon>Sordariales</taxon>
        <taxon>Sordariaceae</taxon>
        <taxon>Neurospora</taxon>
    </lineage>
</organism>
<dbReference type="EC" id="4.1.1.1"/>
<dbReference type="EMBL" id="L09125">
    <property type="protein sequence ID" value="AAA33567.1"/>
    <property type="molecule type" value="mRNA"/>
</dbReference>
<dbReference type="EMBL" id="U65927">
    <property type="protein sequence ID" value="AAB17969.1"/>
    <property type="molecule type" value="Genomic_DNA"/>
</dbReference>
<dbReference type="EMBL" id="CM002242">
    <property type="protein sequence ID" value="ESA42032.1"/>
    <property type="molecule type" value="Genomic_DNA"/>
</dbReference>
<dbReference type="EMBL" id="S40298">
    <property type="protein sequence ID" value="AAB22524.2"/>
    <property type="molecule type" value="mRNA"/>
</dbReference>
<dbReference type="PIR" id="JN0782">
    <property type="entry name" value="JN0782"/>
</dbReference>
<dbReference type="RefSeq" id="XP_011395109.1">
    <property type="nucleotide sequence ID" value="XM_011396807.1"/>
</dbReference>
<dbReference type="SMR" id="P33287"/>
<dbReference type="MINT" id="P33287"/>
<dbReference type="STRING" id="367110.P33287"/>
<dbReference type="PaxDb" id="5141-EFNCRP00000003234"/>
<dbReference type="EnsemblFungi" id="ESA42032">
    <property type="protein sequence ID" value="ESA42032"/>
    <property type="gene ID" value="NCU02193"/>
</dbReference>
<dbReference type="GeneID" id="3875734"/>
<dbReference type="KEGG" id="ncr:NCU02193"/>
<dbReference type="VEuPathDB" id="FungiDB:NCU02193"/>
<dbReference type="InParanoid" id="P33287"/>
<dbReference type="OMA" id="IFWGQVS"/>
<dbReference type="OrthoDB" id="3970464at2759"/>
<dbReference type="UniPathway" id="UPA00231"/>
<dbReference type="Proteomes" id="UP000001805">
    <property type="component" value="Chromosome 7, Linkage Group VII"/>
</dbReference>
<dbReference type="GO" id="GO:0005829">
    <property type="term" value="C:cytosol"/>
    <property type="evidence" value="ECO:0000318"/>
    <property type="project" value="GO_Central"/>
</dbReference>
<dbReference type="GO" id="GO:0042802">
    <property type="term" value="F:identical protein binding"/>
    <property type="evidence" value="ECO:0000353"/>
    <property type="project" value="IntAct"/>
</dbReference>
<dbReference type="GO" id="GO:0000287">
    <property type="term" value="F:magnesium ion binding"/>
    <property type="evidence" value="ECO:0007669"/>
    <property type="project" value="InterPro"/>
</dbReference>
<dbReference type="GO" id="GO:0004737">
    <property type="term" value="F:pyruvate decarboxylase activity"/>
    <property type="evidence" value="ECO:0000318"/>
    <property type="project" value="GO_Central"/>
</dbReference>
<dbReference type="GO" id="GO:0030976">
    <property type="term" value="F:thiamine pyrophosphate binding"/>
    <property type="evidence" value="ECO:0007669"/>
    <property type="project" value="InterPro"/>
</dbReference>
<dbReference type="GO" id="GO:0000949">
    <property type="term" value="P:aromatic amino acid family catabolic process to alcohol via Ehrlich pathway"/>
    <property type="evidence" value="ECO:0000318"/>
    <property type="project" value="GO_Central"/>
</dbReference>
<dbReference type="GO" id="GO:0006090">
    <property type="term" value="P:pyruvate metabolic process"/>
    <property type="evidence" value="ECO:0007669"/>
    <property type="project" value="UniProtKB-UniPathway"/>
</dbReference>
<dbReference type="CDD" id="cd02005">
    <property type="entry name" value="TPP_PDC_IPDC"/>
    <property type="match status" value="1"/>
</dbReference>
<dbReference type="CDD" id="cd07038">
    <property type="entry name" value="TPP_PYR_PDC_IPDC_like"/>
    <property type="match status" value="1"/>
</dbReference>
<dbReference type="FunFam" id="3.40.50.1220:FF:000009">
    <property type="entry name" value="Pyruvate decarboxylase 1"/>
    <property type="match status" value="1"/>
</dbReference>
<dbReference type="FunFam" id="3.40.50.970:FF:000019">
    <property type="entry name" value="Pyruvate decarboxylase isozyme"/>
    <property type="match status" value="1"/>
</dbReference>
<dbReference type="FunFam" id="3.40.50.970:FF:000024">
    <property type="entry name" value="Pyruvate decarboxylase isozyme"/>
    <property type="match status" value="1"/>
</dbReference>
<dbReference type="Gene3D" id="3.40.50.970">
    <property type="match status" value="2"/>
</dbReference>
<dbReference type="Gene3D" id="3.40.50.1220">
    <property type="entry name" value="TPP-binding domain"/>
    <property type="match status" value="1"/>
</dbReference>
<dbReference type="InterPro" id="IPR029035">
    <property type="entry name" value="DHS-like_NAD/FAD-binding_dom"/>
</dbReference>
<dbReference type="InterPro" id="IPR012110">
    <property type="entry name" value="PDC/IPDC-like"/>
</dbReference>
<dbReference type="InterPro" id="IPR029061">
    <property type="entry name" value="THDP-binding"/>
</dbReference>
<dbReference type="InterPro" id="IPR012000">
    <property type="entry name" value="Thiamin_PyroP_enz_cen_dom"/>
</dbReference>
<dbReference type="InterPro" id="IPR012001">
    <property type="entry name" value="Thiamin_PyroP_enz_TPP-bd_dom"/>
</dbReference>
<dbReference type="InterPro" id="IPR000399">
    <property type="entry name" value="TPP-bd_CS"/>
</dbReference>
<dbReference type="InterPro" id="IPR011766">
    <property type="entry name" value="TPP_enzyme_TPP-bd"/>
</dbReference>
<dbReference type="InterPro" id="IPR047214">
    <property type="entry name" value="TPP_PDC_IPDC"/>
</dbReference>
<dbReference type="InterPro" id="IPR047213">
    <property type="entry name" value="TPP_PYR_PDC_IPDC-like"/>
</dbReference>
<dbReference type="PANTHER" id="PTHR43452">
    <property type="entry name" value="PYRUVATE DECARBOXYLASE"/>
    <property type="match status" value="1"/>
</dbReference>
<dbReference type="PANTHER" id="PTHR43452:SF1">
    <property type="entry name" value="PYRUVATE DECARBOXYLASE C186.09-RELATED"/>
    <property type="match status" value="1"/>
</dbReference>
<dbReference type="Pfam" id="PF02775">
    <property type="entry name" value="TPP_enzyme_C"/>
    <property type="match status" value="1"/>
</dbReference>
<dbReference type="Pfam" id="PF00205">
    <property type="entry name" value="TPP_enzyme_M"/>
    <property type="match status" value="1"/>
</dbReference>
<dbReference type="Pfam" id="PF02776">
    <property type="entry name" value="TPP_enzyme_N"/>
    <property type="match status" value="1"/>
</dbReference>
<dbReference type="PIRSF" id="PIRSF036565">
    <property type="entry name" value="Pyruvt_ip_decrb"/>
    <property type="match status" value="1"/>
</dbReference>
<dbReference type="SUPFAM" id="SSF52467">
    <property type="entry name" value="DHS-like NAD/FAD-binding domain"/>
    <property type="match status" value="1"/>
</dbReference>
<dbReference type="SUPFAM" id="SSF52518">
    <property type="entry name" value="Thiamin diphosphate-binding fold (THDP-binding)"/>
    <property type="match status" value="2"/>
</dbReference>
<dbReference type="PROSITE" id="PS00187">
    <property type="entry name" value="TPP_ENZYMES"/>
    <property type="match status" value="1"/>
</dbReference>
<comment type="catalytic activity">
    <reaction>
        <text>a 2-oxocarboxylate + H(+) = an aldehyde + CO2</text>
        <dbReference type="Rhea" id="RHEA:11628"/>
        <dbReference type="ChEBI" id="CHEBI:15378"/>
        <dbReference type="ChEBI" id="CHEBI:16526"/>
        <dbReference type="ChEBI" id="CHEBI:17478"/>
        <dbReference type="ChEBI" id="CHEBI:35179"/>
        <dbReference type="EC" id="4.1.1.1"/>
    </reaction>
</comment>
<comment type="cofactor">
    <cofactor>
        <name>a metal cation</name>
        <dbReference type="ChEBI" id="CHEBI:25213"/>
    </cofactor>
    <text>Binds 1 metal ion per subunit.</text>
</comment>
<comment type="cofactor">
    <cofactor>
        <name>thiamine diphosphate</name>
        <dbReference type="ChEBI" id="CHEBI:58937"/>
    </cofactor>
    <text>Binds 1 thiamine pyrophosphate per subunit.</text>
</comment>
<comment type="pathway">
    <text>Carbohydrate metabolism; pyruvate metabolism.</text>
</comment>
<comment type="subunit">
    <text>Homomer.</text>
</comment>
<comment type="interaction">
    <interactant intactId="EBI-7533403">
        <id>P33287</id>
    </interactant>
    <interactant intactId="EBI-7533403">
        <id>P33287</id>
        <label>cfp</label>
    </interactant>
    <organismsDiffer>false</organismsDiffer>
    <experiments>5</experiments>
</comment>
<comment type="subcellular location">
    <subcellularLocation>
        <location>Cytoplasm</location>
    </subcellularLocation>
    <text>Cytoplasmic filaments.</text>
</comment>
<comment type="similarity">
    <text evidence="3">Belongs to the TPP enzyme family.</text>
</comment>
<proteinExistence type="evidence at protein level"/>
<feature type="propeptide" id="PRO_0000035653" description="Removed in mature form" evidence="2">
    <location>
        <begin position="1"/>
        <end position="2"/>
    </location>
</feature>
<feature type="chain" id="PRO_0000035654" description="Pyruvate decarboxylase">
    <location>
        <begin position="3"/>
        <end position="570"/>
    </location>
</feature>
<feature type="region of interest" description="Thiamine pyrophosphate binding">
    <location>
        <begin position="394"/>
        <end position="476"/>
    </location>
</feature>
<feature type="binding site" evidence="1">
    <location>
        <position position="33"/>
    </location>
    <ligand>
        <name>substrate</name>
    </ligand>
</feature>
<feature type="binding site" evidence="1">
    <location>
        <position position="120"/>
    </location>
    <ligand>
        <name>substrate</name>
    </ligand>
</feature>
<feature type="binding site" evidence="1">
    <location>
        <position position="444"/>
    </location>
    <ligand>
        <name>Mg(2+)</name>
        <dbReference type="ChEBI" id="CHEBI:18420"/>
    </ligand>
</feature>
<feature type="binding site" evidence="1">
    <location>
        <position position="471"/>
    </location>
    <ligand>
        <name>Mg(2+)</name>
        <dbReference type="ChEBI" id="CHEBI:18420"/>
    </ligand>
</feature>
<feature type="binding site" evidence="1">
    <location>
        <position position="473"/>
    </location>
    <ligand>
        <name>Mg(2+)</name>
        <dbReference type="ChEBI" id="CHEBI:18420"/>
    </ligand>
</feature>
<feature type="binding site" evidence="1">
    <location>
        <position position="477"/>
    </location>
    <ligand>
        <name>substrate</name>
    </ligand>
</feature>
<keyword id="KW-0963">Cytoplasm</keyword>
<keyword id="KW-0210">Decarboxylase</keyword>
<keyword id="KW-0903">Direct protein sequencing</keyword>
<keyword id="KW-0456">Lyase</keyword>
<keyword id="KW-0460">Magnesium</keyword>
<keyword id="KW-0479">Metal-binding</keyword>
<keyword id="KW-1185">Reference proteome</keyword>
<keyword id="KW-0786">Thiamine pyrophosphate</keyword>
<name>PDC_NEUCR</name>